<feature type="chain" id="PRO_0000156501" description="Polyamine aminopropyltransferase 1">
    <location>
        <begin position="1"/>
        <end position="525"/>
    </location>
</feature>
<feature type="transmembrane region" description="Helical" evidence="1">
    <location>
        <begin position="21"/>
        <end position="41"/>
    </location>
</feature>
<feature type="transmembrane region" description="Helical" evidence="1">
    <location>
        <begin position="53"/>
        <end position="73"/>
    </location>
</feature>
<feature type="transmembrane region" description="Helical" evidence="1">
    <location>
        <begin position="89"/>
        <end position="109"/>
    </location>
</feature>
<feature type="transmembrane region" description="Helical" evidence="1">
    <location>
        <begin position="117"/>
        <end position="137"/>
    </location>
</feature>
<feature type="transmembrane region" description="Helical" evidence="1">
    <location>
        <begin position="155"/>
        <end position="175"/>
    </location>
</feature>
<feature type="transmembrane region" description="Helical" evidence="1">
    <location>
        <begin position="180"/>
        <end position="200"/>
    </location>
</feature>
<feature type="domain" description="PABS" evidence="1">
    <location>
        <begin position="220"/>
        <end position="464"/>
    </location>
</feature>
<feature type="region of interest" description="Spermidine synthase">
    <location>
        <begin position="222"/>
        <end position="471"/>
    </location>
</feature>
<feature type="active site" description="Proton acceptor" evidence="1">
    <location>
        <position position="385"/>
    </location>
</feature>
<feature type="binding site" evidence="1">
    <location>
        <position position="259"/>
    </location>
    <ligand>
        <name>S-methyl-5'-thioadenosine</name>
        <dbReference type="ChEBI" id="CHEBI:17509"/>
    </ligand>
</feature>
<feature type="binding site" evidence="1">
    <location>
        <position position="289"/>
    </location>
    <ligand>
        <name>spermidine</name>
        <dbReference type="ChEBI" id="CHEBI:57834"/>
    </ligand>
</feature>
<feature type="binding site" evidence="1">
    <location>
        <position position="313"/>
    </location>
    <ligand>
        <name>spermidine</name>
        <dbReference type="ChEBI" id="CHEBI:57834"/>
    </ligand>
</feature>
<feature type="binding site" evidence="1">
    <location>
        <position position="333"/>
    </location>
    <ligand>
        <name>S-methyl-5'-thioadenosine</name>
        <dbReference type="ChEBI" id="CHEBI:17509"/>
    </ligand>
</feature>
<feature type="binding site" evidence="1">
    <location>
        <begin position="367"/>
        <end position="368"/>
    </location>
    <ligand>
        <name>S-methyl-5'-thioadenosine</name>
        <dbReference type="ChEBI" id="CHEBI:17509"/>
    </ligand>
</feature>
<organism>
    <name type="scientific">Ralstonia nicotianae (strain ATCC BAA-1114 / GMI1000)</name>
    <name type="common">Ralstonia solanacearum</name>
    <dbReference type="NCBI Taxonomy" id="267608"/>
    <lineage>
        <taxon>Bacteria</taxon>
        <taxon>Pseudomonadati</taxon>
        <taxon>Pseudomonadota</taxon>
        <taxon>Betaproteobacteria</taxon>
        <taxon>Burkholderiales</taxon>
        <taxon>Burkholderiaceae</taxon>
        <taxon>Ralstonia</taxon>
        <taxon>Ralstonia solanacearum species complex</taxon>
    </lineage>
</organism>
<geneLocation type="plasmid">
    <name>megaplasmid Rsp</name>
</geneLocation>
<proteinExistence type="inferred from homology"/>
<name>SPEE1_RALN1</name>
<evidence type="ECO:0000255" key="1">
    <source>
        <dbReference type="HAMAP-Rule" id="MF_00198"/>
    </source>
</evidence>
<accession>Q8XQC8</accession>
<gene>
    <name evidence="1" type="primary">speE1</name>
    <name type="synonym">speE2</name>
    <name type="ordered locus">RSp1306</name>
    <name type="ORF">RS05693</name>
</gene>
<protein>
    <recommendedName>
        <fullName evidence="1">Polyamine aminopropyltransferase 1</fullName>
    </recommendedName>
    <alternativeName>
        <fullName evidence="1">Putrescine aminopropyltransferase 1</fullName>
        <shortName evidence="1">PAPT 1</shortName>
    </alternativeName>
    <alternativeName>
        <fullName evidence="1">Spermidine synthase 1</fullName>
        <shortName evidence="1">SPDS 1</shortName>
        <shortName evidence="1">SPDSY 1</shortName>
        <ecNumber evidence="1">2.5.1.16</ecNumber>
    </alternativeName>
</protein>
<comment type="function">
    <text evidence="1">Catalyzes the irreversible transfer of a propylamine group from the amino donor S-adenosylmethioninamine (decarboxy-AdoMet) to putrescine (1,4-diaminobutane) to yield spermidine.</text>
</comment>
<comment type="catalytic activity">
    <reaction evidence="1">
        <text>S-adenosyl 3-(methylsulfanyl)propylamine + putrescine = S-methyl-5'-thioadenosine + spermidine + H(+)</text>
        <dbReference type="Rhea" id="RHEA:12721"/>
        <dbReference type="ChEBI" id="CHEBI:15378"/>
        <dbReference type="ChEBI" id="CHEBI:17509"/>
        <dbReference type="ChEBI" id="CHEBI:57443"/>
        <dbReference type="ChEBI" id="CHEBI:57834"/>
        <dbReference type="ChEBI" id="CHEBI:326268"/>
        <dbReference type="EC" id="2.5.1.16"/>
    </reaction>
</comment>
<comment type="pathway">
    <text evidence="1">Amine and polyamine biosynthesis; spermidine biosynthesis; spermidine from putrescine: step 1/1.</text>
</comment>
<comment type="subunit">
    <text evidence="1">Homodimer or homotetramer.</text>
</comment>
<comment type="subcellular location">
    <subcellularLocation>
        <location evidence="1">Cell membrane</location>
        <topology evidence="1">Multi-pass membrane protein</topology>
    </subcellularLocation>
</comment>
<comment type="similarity">
    <text evidence="1">Belongs to the spermidine/spermine synthase family.</text>
</comment>
<dbReference type="EC" id="2.5.1.16" evidence="1"/>
<dbReference type="EMBL" id="AL646053">
    <property type="protein sequence ID" value="CAD18457.1"/>
    <property type="molecule type" value="Genomic_DNA"/>
</dbReference>
<dbReference type="RefSeq" id="WP_011004585.1">
    <property type="nucleotide sequence ID" value="NC_003296.1"/>
</dbReference>
<dbReference type="SMR" id="Q8XQC8"/>
<dbReference type="STRING" id="267608.RSp1306"/>
<dbReference type="EnsemblBacteria" id="CAD18457">
    <property type="protein sequence ID" value="CAD18457"/>
    <property type="gene ID" value="RSp1306"/>
</dbReference>
<dbReference type="KEGG" id="rso:RSp1306"/>
<dbReference type="eggNOG" id="COG4262">
    <property type="taxonomic scope" value="Bacteria"/>
</dbReference>
<dbReference type="HOGENOM" id="CLU_034289_1_0_4"/>
<dbReference type="UniPathway" id="UPA00248">
    <property type="reaction ID" value="UER00314"/>
</dbReference>
<dbReference type="Proteomes" id="UP000001436">
    <property type="component" value="Plasmid megaplasmid Rsp"/>
</dbReference>
<dbReference type="GO" id="GO:0005886">
    <property type="term" value="C:plasma membrane"/>
    <property type="evidence" value="ECO:0007669"/>
    <property type="project" value="UniProtKB-SubCell"/>
</dbReference>
<dbReference type="GO" id="GO:0004766">
    <property type="term" value="F:spermidine synthase activity"/>
    <property type="evidence" value="ECO:0007669"/>
    <property type="project" value="UniProtKB-UniRule"/>
</dbReference>
<dbReference type="GO" id="GO:0010487">
    <property type="term" value="F:thermospermine synthase activity"/>
    <property type="evidence" value="ECO:0007669"/>
    <property type="project" value="UniProtKB-ARBA"/>
</dbReference>
<dbReference type="GO" id="GO:0008295">
    <property type="term" value="P:spermidine biosynthetic process"/>
    <property type="evidence" value="ECO:0007669"/>
    <property type="project" value="UniProtKB-UniRule"/>
</dbReference>
<dbReference type="CDD" id="cd02440">
    <property type="entry name" value="AdoMet_MTases"/>
    <property type="match status" value="1"/>
</dbReference>
<dbReference type="Gene3D" id="3.40.50.150">
    <property type="entry name" value="Vaccinia Virus protein VP39"/>
    <property type="match status" value="1"/>
</dbReference>
<dbReference type="HAMAP" id="MF_00198">
    <property type="entry name" value="Spermidine_synth"/>
    <property type="match status" value="1"/>
</dbReference>
<dbReference type="InterPro" id="IPR030374">
    <property type="entry name" value="PABS"/>
</dbReference>
<dbReference type="InterPro" id="IPR029063">
    <property type="entry name" value="SAM-dependent_MTases_sf"/>
</dbReference>
<dbReference type="InterPro" id="IPR001045">
    <property type="entry name" value="Spermi_synthase"/>
</dbReference>
<dbReference type="NCBIfam" id="NF002956">
    <property type="entry name" value="PRK03612.1"/>
    <property type="match status" value="1"/>
</dbReference>
<dbReference type="PANTHER" id="PTHR43317">
    <property type="entry name" value="THERMOSPERMINE SYNTHASE ACAULIS5"/>
    <property type="match status" value="1"/>
</dbReference>
<dbReference type="PANTHER" id="PTHR43317:SF1">
    <property type="entry name" value="THERMOSPERMINE SYNTHASE ACAULIS5"/>
    <property type="match status" value="1"/>
</dbReference>
<dbReference type="Pfam" id="PF01564">
    <property type="entry name" value="Spermine_synth"/>
    <property type="match status" value="1"/>
</dbReference>
<dbReference type="SUPFAM" id="SSF53335">
    <property type="entry name" value="S-adenosyl-L-methionine-dependent methyltransferases"/>
    <property type="match status" value="1"/>
</dbReference>
<dbReference type="PROSITE" id="PS51006">
    <property type="entry name" value="PABS_2"/>
    <property type="match status" value="1"/>
</dbReference>
<keyword id="KW-1003">Cell membrane</keyword>
<keyword id="KW-0472">Membrane</keyword>
<keyword id="KW-0614">Plasmid</keyword>
<keyword id="KW-0620">Polyamine biosynthesis</keyword>
<keyword id="KW-1185">Reference proteome</keyword>
<keyword id="KW-0745">Spermidine biosynthesis</keyword>
<keyword id="KW-0808">Transferase</keyword>
<keyword id="KW-0812">Transmembrane</keyword>
<keyword id="KW-1133">Transmembrane helix</keyword>
<sequence length="525" mass="58094">MPTPPPDALDASPQPVNRGNALLVLAVFVVASCGLAYELIAGALASYLLGDSILQFSSIIGAYLFAMGIGSWVSRYVADDALLARFVDLELLVGLFGGVSAAALFLLFALESAPFRLVLYALVTVIGVLVGMEIPLVMRMLHRRQAKFSDLVSRVLTFDYLGALAVSLLFPLVLAPRLGLVRTGFLFGLCNTAIAVWTLWHFRAELGLSARLRGAMAWRAGMVGAALLAGFAASDRLTHWSERALFGDEIIHAISSPYQRLVVTRWKDDLRLYINGNLQFSSRDEYRYHEALVLPALESVRGARRVLVLGGGDGLALRQILKYPQVEHVTLVDLDPRMTSLFSHAEALVALNQHAFSDPRVTVVNADAGQWLQTAADMFDVAIVDFPDPSNFSIGKLYSVPFYRLLSRHVADTGLVVIQATSPYFAPRSYWCVDATLKEAGYRTWPYHALVPSFGEWGFILAAPGRADFRPPTTYRVPTRFLDADTTHQMFSFAPDMPRPQVEPNRLNNQSLVRYFEEDWHGVLR</sequence>
<reference key="1">
    <citation type="journal article" date="2002" name="Nature">
        <title>Genome sequence of the plant pathogen Ralstonia solanacearum.</title>
        <authorList>
            <person name="Salanoubat M."/>
            <person name="Genin S."/>
            <person name="Artiguenave F."/>
            <person name="Gouzy J."/>
            <person name="Mangenot S."/>
            <person name="Arlat M."/>
            <person name="Billault A."/>
            <person name="Brottier P."/>
            <person name="Camus J.-C."/>
            <person name="Cattolico L."/>
            <person name="Chandler M."/>
            <person name="Choisne N."/>
            <person name="Claudel-Renard C."/>
            <person name="Cunnac S."/>
            <person name="Demange N."/>
            <person name="Gaspin C."/>
            <person name="Lavie M."/>
            <person name="Moisan A."/>
            <person name="Robert C."/>
            <person name="Saurin W."/>
            <person name="Schiex T."/>
            <person name="Siguier P."/>
            <person name="Thebault P."/>
            <person name="Whalen M."/>
            <person name="Wincker P."/>
            <person name="Levy M."/>
            <person name="Weissenbach J."/>
            <person name="Boucher C.A."/>
        </authorList>
    </citation>
    <scope>NUCLEOTIDE SEQUENCE [LARGE SCALE GENOMIC DNA]</scope>
    <source>
        <strain>ATCC BAA-1114 / GMI1000</strain>
    </source>
</reference>